<gene>
    <name evidence="1" type="primary">metE</name>
    <name type="ordered locus">CJJ81176_1216</name>
</gene>
<reference key="1">
    <citation type="submission" date="2006-12" db="EMBL/GenBank/DDBJ databases">
        <authorList>
            <person name="Fouts D.E."/>
            <person name="Nelson K.E."/>
            <person name="Sebastian Y."/>
        </authorList>
    </citation>
    <scope>NUCLEOTIDE SEQUENCE [LARGE SCALE GENOMIC DNA]</scope>
    <source>
        <strain>81-176</strain>
    </source>
</reference>
<organism>
    <name type="scientific">Campylobacter jejuni subsp. jejuni serotype O:23/36 (strain 81-176)</name>
    <dbReference type="NCBI Taxonomy" id="354242"/>
    <lineage>
        <taxon>Bacteria</taxon>
        <taxon>Pseudomonadati</taxon>
        <taxon>Campylobacterota</taxon>
        <taxon>Epsilonproteobacteria</taxon>
        <taxon>Campylobacterales</taxon>
        <taxon>Campylobacteraceae</taxon>
        <taxon>Campylobacter</taxon>
    </lineage>
</organism>
<keyword id="KW-0028">Amino-acid biosynthesis</keyword>
<keyword id="KW-0479">Metal-binding</keyword>
<keyword id="KW-0486">Methionine biosynthesis</keyword>
<keyword id="KW-0489">Methyltransferase</keyword>
<keyword id="KW-0677">Repeat</keyword>
<keyword id="KW-0808">Transferase</keyword>
<keyword id="KW-0862">Zinc</keyword>
<protein>
    <recommendedName>
        <fullName evidence="1">5-methyltetrahydropteroyltriglutamate--homocysteine methyltransferase</fullName>
        <ecNumber evidence="1">2.1.1.14</ecNumber>
    </recommendedName>
    <alternativeName>
        <fullName evidence="1">Cobalamin-independent methionine synthase</fullName>
    </alternativeName>
    <alternativeName>
        <fullName evidence="1">Methionine synthase, vitamin-B12 independent isozyme</fullName>
    </alternativeName>
</protein>
<feature type="chain" id="PRO_1000017235" description="5-methyltetrahydropteroyltriglutamate--homocysteine methyltransferase">
    <location>
        <begin position="1"/>
        <end position="754"/>
    </location>
</feature>
<feature type="active site" description="Proton donor" evidence="1">
    <location>
        <position position="694"/>
    </location>
</feature>
<feature type="binding site" evidence="1">
    <location>
        <begin position="15"/>
        <end position="18"/>
    </location>
    <ligand>
        <name>5-methyltetrahydropteroyltri-L-glutamate</name>
        <dbReference type="ChEBI" id="CHEBI:58207"/>
    </ligand>
</feature>
<feature type="binding site" evidence="1">
    <location>
        <position position="114"/>
    </location>
    <ligand>
        <name>5-methyltetrahydropteroyltri-L-glutamate</name>
        <dbReference type="ChEBI" id="CHEBI:58207"/>
    </ligand>
</feature>
<feature type="binding site" evidence="1">
    <location>
        <begin position="430"/>
        <end position="432"/>
    </location>
    <ligand>
        <name>L-homocysteine</name>
        <dbReference type="ChEBI" id="CHEBI:58199"/>
    </ligand>
</feature>
<feature type="binding site" evidence="1">
    <location>
        <begin position="430"/>
        <end position="432"/>
    </location>
    <ligand>
        <name>L-methionine</name>
        <dbReference type="ChEBI" id="CHEBI:57844"/>
    </ligand>
</feature>
<feature type="binding site" evidence="1">
    <location>
        <position position="483"/>
    </location>
    <ligand>
        <name>L-homocysteine</name>
        <dbReference type="ChEBI" id="CHEBI:58199"/>
    </ligand>
</feature>
<feature type="binding site" evidence="1">
    <location>
        <position position="483"/>
    </location>
    <ligand>
        <name>L-methionine</name>
        <dbReference type="ChEBI" id="CHEBI:57844"/>
    </ligand>
</feature>
<feature type="binding site" evidence="1">
    <location>
        <begin position="514"/>
        <end position="515"/>
    </location>
    <ligand>
        <name>5-methyltetrahydropteroyltri-L-glutamate</name>
        <dbReference type="ChEBI" id="CHEBI:58207"/>
    </ligand>
</feature>
<feature type="binding site" evidence="1">
    <location>
        <position position="560"/>
    </location>
    <ligand>
        <name>5-methyltetrahydropteroyltri-L-glutamate</name>
        <dbReference type="ChEBI" id="CHEBI:58207"/>
    </ligand>
</feature>
<feature type="binding site" evidence="1">
    <location>
        <position position="598"/>
    </location>
    <ligand>
        <name>L-homocysteine</name>
        <dbReference type="ChEBI" id="CHEBI:58199"/>
    </ligand>
</feature>
<feature type="binding site" evidence="1">
    <location>
        <position position="598"/>
    </location>
    <ligand>
        <name>L-methionine</name>
        <dbReference type="ChEBI" id="CHEBI:57844"/>
    </ligand>
</feature>
<feature type="binding site" evidence="1">
    <location>
        <position position="604"/>
    </location>
    <ligand>
        <name>5-methyltetrahydropteroyltri-L-glutamate</name>
        <dbReference type="ChEBI" id="CHEBI:58207"/>
    </ligand>
</feature>
<feature type="binding site" evidence="1">
    <location>
        <position position="641"/>
    </location>
    <ligand>
        <name>Zn(2+)</name>
        <dbReference type="ChEBI" id="CHEBI:29105"/>
        <note>catalytic</note>
    </ligand>
</feature>
<feature type="binding site" evidence="1">
    <location>
        <position position="643"/>
    </location>
    <ligand>
        <name>Zn(2+)</name>
        <dbReference type="ChEBI" id="CHEBI:29105"/>
        <note>catalytic</note>
    </ligand>
</feature>
<feature type="binding site" evidence="1">
    <location>
        <position position="665"/>
    </location>
    <ligand>
        <name>Zn(2+)</name>
        <dbReference type="ChEBI" id="CHEBI:29105"/>
        <note>catalytic</note>
    </ligand>
</feature>
<feature type="binding site" evidence="1">
    <location>
        <position position="726"/>
    </location>
    <ligand>
        <name>Zn(2+)</name>
        <dbReference type="ChEBI" id="CHEBI:29105"/>
        <note>catalytic</note>
    </ligand>
</feature>
<comment type="function">
    <text evidence="1">Catalyzes the transfer of a methyl group from 5-methyltetrahydrofolate to homocysteine resulting in methionine formation.</text>
</comment>
<comment type="catalytic activity">
    <reaction evidence="1">
        <text>5-methyltetrahydropteroyltri-L-glutamate + L-homocysteine = tetrahydropteroyltri-L-glutamate + L-methionine</text>
        <dbReference type="Rhea" id="RHEA:21196"/>
        <dbReference type="ChEBI" id="CHEBI:57844"/>
        <dbReference type="ChEBI" id="CHEBI:58140"/>
        <dbReference type="ChEBI" id="CHEBI:58199"/>
        <dbReference type="ChEBI" id="CHEBI:58207"/>
        <dbReference type="EC" id="2.1.1.14"/>
    </reaction>
</comment>
<comment type="cofactor">
    <cofactor evidence="1">
        <name>Zn(2+)</name>
        <dbReference type="ChEBI" id="CHEBI:29105"/>
    </cofactor>
    <text evidence="1">Binds 1 zinc ion per subunit.</text>
</comment>
<comment type="pathway">
    <text evidence="1">Amino-acid biosynthesis; L-methionine biosynthesis via de novo pathway; L-methionine from L-homocysteine (MetE route): step 1/1.</text>
</comment>
<comment type="similarity">
    <text evidence="1">Belongs to the vitamin-B12 independent methionine synthase family.</text>
</comment>
<evidence type="ECO:0000255" key="1">
    <source>
        <dbReference type="HAMAP-Rule" id="MF_00172"/>
    </source>
</evidence>
<name>METE_CAMJJ</name>
<dbReference type="EC" id="2.1.1.14" evidence="1"/>
<dbReference type="EMBL" id="CP000538">
    <property type="protein sequence ID" value="EAQ72178.1"/>
    <property type="molecule type" value="Genomic_DNA"/>
</dbReference>
<dbReference type="RefSeq" id="WP_002868863.1">
    <property type="nucleotide sequence ID" value="NC_008787.1"/>
</dbReference>
<dbReference type="SMR" id="A1W0I5"/>
<dbReference type="KEGG" id="cjj:CJJ81176_1216"/>
<dbReference type="eggNOG" id="COG0620">
    <property type="taxonomic scope" value="Bacteria"/>
</dbReference>
<dbReference type="HOGENOM" id="CLU_013175_0_0_7"/>
<dbReference type="UniPathway" id="UPA00051">
    <property type="reaction ID" value="UER00082"/>
</dbReference>
<dbReference type="Proteomes" id="UP000000646">
    <property type="component" value="Chromosome"/>
</dbReference>
<dbReference type="GO" id="GO:0003871">
    <property type="term" value="F:5-methyltetrahydropteroyltriglutamate-homocysteine S-methyltransferase activity"/>
    <property type="evidence" value="ECO:0007669"/>
    <property type="project" value="UniProtKB-UniRule"/>
</dbReference>
<dbReference type="GO" id="GO:0008270">
    <property type="term" value="F:zinc ion binding"/>
    <property type="evidence" value="ECO:0007669"/>
    <property type="project" value="InterPro"/>
</dbReference>
<dbReference type="GO" id="GO:0009086">
    <property type="term" value="P:methionine biosynthetic process"/>
    <property type="evidence" value="ECO:0007669"/>
    <property type="project" value="UniProtKB-UniRule"/>
</dbReference>
<dbReference type="GO" id="GO:0032259">
    <property type="term" value="P:methylation"/>
    <property type="evidence" value="ECO:0007669"/>
    <property type="project" value="UniProtKB-KW"/>
</dbReference>
<dbReference type="CDD" id="cd03311">
    <property type="entry name" value="CIMS_C_terminal_like"/>
    <property type="match status" value="1"/>
</dbReference>
<dbReference type="CDD" id="cd03312">
    <property type="entry name" value="CIMS_N_terminal_like"/>
    <property type="match status" value="1"/>
</dbReference>
<dbReference type="Gene3D" id="3.20.20.210">
    <property type="match status" value="2"/>
</dbReference>
<dbReference type="HAMAP" id="MF_00172">
    <property type="entry name" value="Meth_synth"/>
    <property type="match status" value="1"/>
</dbReference>
<dbReference type="InterPro" id="IPR013215">
    <property type="entry name" value="Cbl-indep_Met_Synth_N"/>
</dbReference>
<dbReference type="InterPro" id="IPR006276">
    <property type="entry name" value="Cobalamin-indep_Met_synthase"/>
</dbReference>
<dbReference type="InterPro" id="IPR002629">
    <property type="entry name" value="Met_Synth_C/arc"/>
</dbReference>
<dbReference type="InterPro" id="IPR038071">
    <property type="entry name" value="UROD/MetE-like_sf"/>
</dbReference>
<dbReference type="NCBIfam" id="TIGR01371">
    <property type="entry name" value="met_syn_B12ind"/>
    <property type="match status" value="1"/>
</dbReference>
<dbReference type="NCBIfam" id="NF003556">
    <property type="entry name" value="PRK05222.1"/>
    <property type="match status" value="1"/>
</dbReference>
<dbReference type="PANTHER" id="PTHR30519">
    <property type="entry name" value="5-METHYLTETRAHYDROPTEROYLTRIGLUTAMATE--HOMOCYSTEINE METHYLTRANSFERASE"/>
    <property type="match status" value="1"/>
</dbReference>
<dbReference type="Pfam" id="PF08267">
    <property type="entry name" value="Meth_synt_1"/>
    <property type="match status" value="1"/>
</dbReference>
<dbReference type="Pfam" id="PF01717">
    <property type="entry name" value="Meth_synt_2"/>
    <property type="match status" value="1"/>
</dbReference>
<dbReference type="PIRSF" id="PIRSF000382">
    <property type="entry name" value="MeTrfase_B12_ind"/>
    <property type="match status" value="1"/>
</dbReference>
<dbReference type="SUPFAM" id="SSF51726">
    <property type="entry name" value="UROD/MetE-like"/>
    <property type="match status" value="2"/>
</dbReference>
<proteinExistence type="inferred from homology"/>
<accession>A1W0I5</accession>
<sequence>MKNSIISYPRIGANRELKFAIEKYFKNQSSKEELLKSAKDLRIRHWQEIQKAGIDFIPSNDFSLYDNVLDAAVLFNIVHTKYKNLNLDALDEYFAQSRGYQGENGDVTALAMKKWFNTNYHYLVPECDNADIIALTGDKIFKEYLEAKELGIESKPVLIGIFTLFKLIAFKDEKTQKLAKEKLLNAYIELFDKLNELKVTWLELDEPYLVYDLSKEDIALFEEFYQELLNHKKDLKILLQSYFGDLRDIYPKLLESKFDALGLDFIEGKQSLALIQKYGFAKDKILFAGLINGKNIYANDYAKSLKLIKELQKYTQNIVLNTSCSLLHVPYSTEFESKLDSSYLKLFAFAKEKLQELKDLKEILNSSEENPLFRANQELFKNIPERLDEKVKARLKALKKEDFTRTPSFKERALIQKEFLKLPLLPTTTIGSFPQSTDVRSNRLAFKQEKISAQNYTEFNQQKIKECIQIQEEIGLDVLVHGEFERNDMVEYFGENLKGFLFTQNGWVQSYGTRCVKPPVIWGDVSRTKPITLAWSKFAQSLSQKIVKGMLTGPVTILNWSFPREDISLKESTEQIALAIRDEVLDLENAGIKIIQIDEAALREKLPLRKSDWHSEYLDWAIPAFNLVHSGVKAKTQIHTHMCYSEFGDILKEIDAMDADVISFEASRSNLSLLDTLKAIRFKTEVGPGVYDIHSPRVPSVEELSLTIEKILNKLPKEQIWINPDCGLKTRAYEEVIASLKNLVTATQKIREQL</sequence>